<protein>
    <recommendedName>
        <fullName evidence="1">Ribosome-binding factor A</fullName>
    </recommendedName>
</protein>
<proteinExistence type="inferred from homology"/>
<gene>
    <name evidence="1" type="primary">rbfA</name>
    <name type="ordered locus">BCc_230</name>
</gene>
<accession>Q057K0</accession>
<comment type="function">
    <text evidence="1">One of several proteins that assist in the late maturation steps of the functional core of the 30S ribosomal subunit. Associates with free 30S ribosomal subunits (but not with 30S subunits that are part of 70S ribosomes or polysomes). Required for efficient processing of 16S rRNA. May interact with the 5'-terminal helix region of 16S rRNA.</text>
</comment>
<comment type="subunit">
    <text evidence="1">Monomer. Binds 30S ribosomal subunits, but not 50S ribosomal subunits or 70S ribosomes.</text>
</comment>
<comment type="subcellular location">
    <subcellularLocation>
        <location evidence="1">Cytoplasm</location>
    </subcellularLocation>
</comment>
<comment type="similarity">
    <text evidence="1">Belongs to the RbfA family.</text>
</comment>
<sequence>MLKDFSRSMRLERSLYKEIAVIIQKNLRDPRLNSFITITEVKLSYDLSYAKVFITFLNYDDKKNIKIILGILQNATGYIRSLLNKKIYLRIVPKLFFVYDTSLINGIFISELIKNI</sequence>
<keyword id="KW-0963">Cytoplasm</keyword>
<keyword id="KW-1185">Reference proteome</keyword>
<keyword id="KW-0690">Ribosome biogenesis</keyword>
<reference key="1">
    <citation type="journal article" date="2006" name="Science">
        <title>A small microbial genome: the end of a long symbiotic relationship?</title>
        <authorList>
            <person name="Perez-Brocal V."/>
            <person name="Gil R."/>
            <person name="Ramos S."/>
            <person name="Lamelas A."/>
            <person name="Postigo M."/>
            <person name="Michelena J.M."/>
            <person name="Silva F.J."/>
            <person name="Moya A."/>
            <person name="Latorre A."/>
        </authorList>
    </citation>
    <scope>NUCLEOTIDE SEQUENCE [LARGE SCALE GENOMIC DNA]</scope>
    <source>
        <strain>Cc</strain>
    </source>
</reference>
<organism>
    <name type="scientific">Buchnera aphidicola subsp. Cinara cedri (strain Cc)</name>
    <dbReference type="NCBI Taxonomy" id="372461"/>
    <lineage>
        <taxon>Bacteria</taxon>
        <taxon>Pseudomonadati</taxon>
        <taxon>Pseudomonadota</taxon>
        <taxon>Gammaproteobacteria</taxon>
        <taxon>Enterobacterales</taxon>
        <taxon>Erwiniaceae</taxon>
        <taxon>Buchnera</taxon>
    </lineage>
</organism>
<feature type="chain" id="PRO_0000321203" description="Ribosome-binding factor A">
    <location>
        <begin position="1"/>
        <end position="116"/>
    </location>
</feature>
<dbReference type="EMBL" id="CP000263">
    <property type="protein sequence ID" value="ABJ90699.1"/>
    <property type="molecule type" value="Genomic_DNA"/>
</dbReference>
<dbReference type="RefSeq" id="WP_011672618.1">
    <property type="nucleotide sequence ID" value="NC_008513.1"/>
</dbReference>
<dbReference type="SMR" id="Q057K0"/>
<dbReference type="STRING" id="372461.BCc_230"/>
<dbReference type="KEGG" id="bcc:BCc_230"/>
<dbReference type="eggNOG" id="COG0858">
    <property type="taxonomic scope" value="Bacteria"/>
</dbReference>
<dbReference type="HOGENOM" id="CLU_089475_5_0_6"/>
<dbReference type="OrthoDB" id="307788at2"/>
<dbReference type="Proteomes" id="UP000000669">
    <property type="component" value="Chromosome"/>
</dbReference>
<dbReference type="GO" id="GO:0005829">
    <property type="term" value="C:cytosol"/>
    <property type="evidence" value="ECO:0007669"/>
    <property type="project" value="TreeGrafter"/>
</dbReference>
<dbReference type="GO" id="GO:0043024">
    <property type="term" value="F:ribosomal small subunit binding"/>
    <property type="evidence" value="ECO:0007669"/>
    <property type="project" value="TreeGrafter"/>
</dbReference>
<dbReference type="GO" id="GO:0030490">
    <property type="term" value="P:maturation of SSU-rRNA"/>
    <property type="evidence" value="ECO:0007669"/>
    <property type="project" value="UniProtKB-UniRule"/>
</dbReference>
<dbReference type="Gene3D" id="3.30.300.20">
    <property type="match status" value="1"/>
</dbReference>
<dbReference type="HAMAP" id="MF_00003">
    <property type="entry name" value="RbfA"/>
    <property type="match status" value="1"/>
</dbReference>
<dbReference type="InterPro" id="IPR015946">
    <property type="entry name" value="KH_dom-like_a/b"/>
</dbReference>
<dbReference type="InterPro" id="IPR000238">
    <property type="entry name" value="RbfA"/>
</dbReference>
<dbReference type="InterPro" id="IPR023799">
    <property type="entry name" value="RbfA_dom_sf"/>
</dbReference>
<dbReference type="InterPro" id="IPR020053">
    <property type="entry name" value="Ribosome-bd_factorA_CS"/>
</dbReference>
<dbReference type="NCBIfam" id="TIGR00082">
    <property type="entry name" value="rbfA"/>
    <property type="match status" value="1"/>
</dbReference>
<dbReference type="PANTHER" id="PTHR33515">
    <property type="entry name" value="RIBOSOME-BINDING FACTOR A, CHLOROPLASTIC-RELATED"/>
    <property type="match status" value="1"/>
</dbReference>
<dbReference type="PANTHER" id="PTHR33515:SF1">
    <property type="entry name" value="RIBOSOME-BINDING FACTOR A, CHLOROPLASTIC-RELATED"/>
    <property type="match status" value="1"/>
</dbReference>
<dbReference type="Pfam" id="PF02033">
    <property type="entry name" value="RBFA"/>
    <property type="match status" value="1"/>
</dbReference>
<dbReference type="SUPFAM" id="SSF89919">
    <property type="entry name" value="Ribosome-binding factor A, RbfA"/>
    <property type="match status" value="1"/>
</dbReference>
<dbReference type="PROSITE" id="PS01319">
    <property type="entry name" value="RBFA"/>
    <property type="match status" value="1"/>
</dbReference>
<name>RBFA_BUCCC</name>
<evidence type="ECO:0000255" key="1">
    <source>
        <dbReference type="HAMAP-Rule" id="MF_00003"/>
    </source>
</evidence>